<organism>
    <name type="scientific">Plasmodium yoelii yoelii</name>
    <dbReference type="NCBI Taxonomy" id="73239"/>
    <lineage>
        <taxon>Eukaryota</taxon>
        <taxon>Sar</taxon>
        <taxon>Alveolata</taxon>
        <taxon>Apicomplexa</taxon>
        <taxon>Aconoidasida</taxon>
        <taxon>Haemosporida</taxon>
        <taxon>Plasmodiidae</taxon>
        <taxon>Plasmodium</taxon>
        <taxon>Plasmodium (Vinckeia)</taxon>
    </lineage>
</organism>
<keyword id="KW-0067">ATP-binding</keyword>
<keyword id="KW-0963">Cytoplasm</keyword>
<keyword id="KW-0206">Cytoskeleton</keyword>
<keyword id="KW-0378">Hydrolase</keyword>
<keyword id="KW-0547">Nucleotide-binding</keyword>
<keyword id="KW-0539">Nucleus</keyword>
<keyword id="KW-1185">Reference proteome</keyword>
<proteinExistence type="inferred from homology"/>
<evidence type="ECO:0000250" key="1">
    <source>
        <dbReference type="UniProtKB" id="P86287"/>
    </source>
</evidence>
<evidence type="ECO:0000250" key="2">
    <source>
        <dbReference type="UniProtKB" id="Q4Z1L3"/>
    </source>
</evidence>
<evidence type="ECO:0000250" key="3">
    <source>
        <dbReference type="UniProtKB" id="Q8I4X0"/>
    </source>
</evidence>
<evidence type="ECO:0000305" key="4"/>
<name>ACT1_PLAYO</name>
<feature type="chain" id="PRO_0000233390" description="Actin-1">
    <location>
        <begin position="1"/>
        <end position="376"/>
    </location>
</feature>
<feature type="region of interest" description="DNAseI-binding D loop; regulates polymerization and stability of the actin filament" evidence="2">
    <location>
        <begin position="40"/>
        <end position="61"/>
    </location>
</feature>
<feature type="binding site" evidence="2">
    <location>
        <position position="15"/>
    </location>
    <ligand>
        <name>ATP</name>
        <dbReference type="ChEBI" id="CHEBI:30616"/>
    </ligand>
</feature>
<feature type="binding site" evidence="2">
    <location>
        <position position="16"/>
    </location>
    <ligand>
        <name>ATP</name>
        <dbReference type="ChEBI" id="CHEBI:30616"/>
    </ligand>
</feature>
<feature type="binding site" evidence="2">
    <location>
        <position position="17"/>
    </location>
    <ligand>
        <name>ATP</name>
        <dbReference type="ChEBI" id="CHEBI:30616"/>
    </ligand>
</feature>
<feature type="binding site" evidence="2">
    <location>
        <position position="19"/>
    </location>
    <ligand>
        <name>ATP</name>
        <dbReference type="ChEBI" id="CHEBI:30616"/>
    </ligand>
</feature>
<feature type="binding site" evidence="2">
    <location>
        <position position="158"/>
    </location>
    <ligand>
        <name>ATP</name>
        <dbReference type="ChEBI" id="CHEBI:30616"/>
    </ligand>
</feature>
<feature type="binding site" evidence="2">
    <location>
        <position position="159"/>
    </location>
    <ligand>
        <name>ATP</name>
        <dbReference type="ChEBI" id="CHEBI:30616"/>
    </ligand>
</feature>
<feature type="binding site" evidence="2">
    <location>
        <position position="160"/>
    </location>
    <ligand>
        <name>ATP</name>
        <dbReference type="ChEBI" id="CHEBI:30616"/>
    </ligand>
</feature>
<feature type="binding site" evidence="2">
    <location>
        <position position="214"/>
    </location>
    <ligand>
        <name>ATP</name>
        <dbReference type="ChEBI" id="CHEBI:30616"/>
    </ligand>
</feature>
<feature type="binding site" evidence="2">
    <location>
        <position position="215"/>
    </location>
    <ligand>
        <name>ATP</name>
        <dbReference type="ChEBI" id="CHEBI:30616"/>
    </ligand>
</feature>
<feature type="binding site" evidence="2">
    <location>
        <position position="303"/>
    </location>
    <ligand>
        <name>ATP</name>
        <dbReference type="ChEBI" id="CHEBI:30616"/>
    </ligand>
</feature>
<sequence length="376" mass="41885">MGDEEVQALVIDNGSGNVKAGVAGDDAPRSVFPSIVGRPKNPGIMVGMEEKDAFVGDEAQTKRGILTLKYPIEHGIVTNWDDMEKIWHHTFYNELRAAPEEHPVLLTEAPLNPKGNRERMTQIMFESFNVPAMYVAIQAVLSLYSSGRTTGIVLDSGDGVSHTVPIYEGYALPHAIMRLDLAGRDLTEYLMKILHERGYGFSTSAEKEIVRDIKEKLCYIALNFDEEMKTSEQSSDIEKSYELPDGNIITVGNERFRCPEALFQPSFLGKEAAGIHTTTFNSIKKCDVDIRKDLYGNIVLSGGTTMYEGIGERLTRDITTLAPSTMKIKVVAPPERKYSVWIGGSILSSLSTFQQMWITKEEYDESGPSIVHRKCF</sequence>
<gene>
    <name evidence="3" type="primary">ACT1</name>
    <name evidence="3" type="synonym">ACTI</name>
    <name type="ORF">PY02240</name>
</gene>
<reference key="1">
    <citation type="journal article" date="2002" name="Nature">
        <title>Genome sequence and comparative analysis of the model rodent malaria parasite Plasmodium yoelii yoelii.</title>
        <authorList>
            <person name="Carlton J.M."/>
            <person name="Angiuoli S.V."/>
            <person name="Suh B.B."/>
            <person name="Kooij T.W."/>
            <person name="Pertea M."/>
            <person name="Silva J.C."/>
            <person name="Ermolaeva M.D."/>
            <person name="Allen J.E."/>
            <person name="Selengut J.D."/>
            <person name="Koo H.L."/>
            <person name="Peterson J.D."/>
            <person name="Pop M."/>
            <person name="Kosack D.S."/>
            <person name="Shumway M.F."/>
            <person name="Bidwell S.L."/>
            <person name="Shallom S.J."/>
            <person name="van Aken S.E."/>
            <person name="Riedmuller S.B."/>
            <person name="Feldblyum T.V."/>
            <person name="Cho J.K."/>
            <person name="Quackenbush J."/>
            <person name="Sedegah M."/>
            <person name="Shoaibi A."/>
            <person name="Cummings L.M."/>
            <person name="Florens L."/>
            <person name="Yates J.R. III"/>
            <person name="Raine J.D."/>
            <person name="Sinden R.E."/>
            <person name="Harris M.A."/>
            <person name="Cunningham D.A."/>
            <person name="Preiser P.R."/>
            <person name="Bergman L.W."/>
            <person name="Vaidya A.B."/>
            <person name="van Lin L.H."/>
            <person name="Janse C.J."/>
            <person name="Waters A.P."/>
            <person name="Smith H.O."/>
            <person name="White O.R."/>
            <person name="Salzberg S.L."/>
            <person name="Venter J.C."/>
            <person name="Fraser C.M."/>
            <person name="Hoffman S.L."/>
            <person name="Gardner M.J."/>
            <person name="Carucci D.J."/>
        </authorList>
    </citation>
    <scope>NUCLEOTIDE SEQUENCE [LARGE SCALE GENOMIC DNA]</scope>
    <source>
        <strain>17XNL</strain>
    </source>
</reference>
<protein>
    <recommendedName>
        <fullName evidence="3">Actin-1</fullName>
        <ecNumber evidence="3">3.6.4.-</ecNumber>
    </recommendedName>
    <alternativeName>
        <fullName evidence="3">Actin I</fullName>
    </alternativeName>
</protein>
<accession>Q7RME1</accession>
<dbReference type="EC" id="3.6.4.-" evidence="3"/>
<dbReference type="EMBL" id="AABL01000613">
    <property type="protein sequence ID" value="EAA21675.1"/>
    <property type="molecule type" value="Genomic_DNA"/>
</dbReference>
<dbReference type="SMR" id="Q7RME1"/>
<dbReference type="STRING" id="73239.Q7RME1"/>
<dbReference type="PaxDb" id="73239-Q7RME1"/>
<dbReference type="EnsemblProtists" id="EAA21675">
    <property type="protein sequence ID" value="EAA21675"/>
    <property type="gene ID" value="EAA21675"/>
</dbReference>
<dbReference type="KEGG" id="pyo:PY17X_1461900"/>
<dbReference type="VEuPathDB" id="PlasmoDB:Py17XNL_001401442"/>
<dbReference type="InParanoid" id="Q7RME1"/>
<dbReference type="Proteomes" id="UP000008553">
    <property type="component" value="Unassembled WGS sequence"/>
</dbReference>
<dbReference type="GO" id="GO:0005737">
    <property type="term" value="C:cytoplasm"/>
    <property type="evidence" value="ECO:0007669"/>
    <property type="project" value="UniProtKB-SubCell"/>
</dbReference>
<dbReference type="GO" id="GO:0005856">
    <property type="term" value="C:cytoskeleton"/>
    <property type="evidence" value="ECO:0007669"/>
    <property type="project" value="UniProtKB-SubCell"/>
</dbReference>
<dbReference type="GO" id="GO:0005634">
    <property type="term" value="C:nucleus"/>
    <property type="evidence" value="ECO:0007669"/>
    <property type="project" value="UniProtKB-SubCell"/>
</dbReference>
<dbReference type="GO" id="GO:0005524">
    <property type="term" value="F:ATP binding"/>
    <property type="evidence" value="ECO:0007669"/>
    <property type="project" value="UniProtKB-KW"/>
</dbReference>
<dbReference type="GO" id="GO:0016787">
    <property type="term" value="F:hydrolase activity"/>
    <property type="evidence" value="ECO:0007669"/>
    <property type="project" value="UniProtKB-KW"/>
</dbReference>
<dbReference type="CDD" id="cd10224">
    <property type="entry name" value="ASKHA_NBD_actin"/>
    <property type="match status" value="1"/>
</dbReference>
<dbReference type="FunFam" id="2.30.36.70:FF:000001">
    <property type="entry name" value="Actin, alpha skeletal muscle"/>
    <property type="match status" value="1"/>
</dbReference>
<dbReference type="FunFam" id="3.30.420.40:FF:000205">
    <property type="entry name" value="Actin, alpha skeletal muscle"/>
    <property type="match status" value="1"/>
</dbReference>
<dbReference type="FunFam" id="3.90.640.10:FF:000001">
    <property type="entry name" value="Actin, muscle"/>
    <property type="match status" value="1"/>
</dbReference>
<dbReference type="FunFam" id="3.30.420.40:FF:000018">
    <property type="entry name" value="Actin-like protein (Centractin)"/>
    <property type="match status" value="1"/>
</dbReference>
<dbReference type="FunFam" id="3.30.420.40:FF:000404">
    <property type="entry name" value="Major actin"/>
    <property type="match status" value="1"/>
</dbReference>
<dbReference type="FunFam" id="3.30.420.40:FF:000058">
    <property type="entry name" value="Putative actin-related protein 5"/>
    <property type="match status" value="1"/>
</dbReference>
<dbReference type="Gene3D" id="3.30.420.40">
    <property type="match status" value="2"/>
</dbReference>
<dbReference type="Gene3D" id="3.90.640.10">
    <property type="entry name" value="Actin, Chain A, domain 4"/>
    <property type="match status" value="1"/>
</dbReference>
<dbReference type="InterPro" id="IPR004000">
    <property type="entry name" value="Actin"/>
</dbReference>
<dbReference type="InterPro" id="IPR020902">
    <property type="entry name" value="Actin/actin-like_CS"/>
</dbReference>
<dbReference type="InterPro" id="IPR004001">
    <property type="entry name" value="Actin_CS"/>
</dbReference>
<dbReference type="InterPro" id="IPR043129">
    <property type="entry name" value="ATPase_NBD"/>
</dbReference>
<dbReference type="PANTHER" id="PTHR11937">
    <property type="entry name" value="ACTIN"/>
    <property type="match status" value="1"/>
</dbReference>
<dbReference type="Pfam" id="PF00022">
    <property type="entry name" value="Actin"/>
    <property type="match status" value="1"/>
</dbReference>
<dbReference type="PRINTS" id="PR00190">
    <property type="entry name" value="ACTIN"/>
</dbReference>
<dbReference type="SMART" id="SM00268">
    <property type="entry name" value="ACTIN"/>
    <property type="match status" value="1"/>
</dbReference>
<dbReference type="SUPFAM" id="SSF53067">
    <property type="entry name" value="Actin-like ATPase domain"/>
    <property type="match status" value="2"/>
</dbReference>
<dbReference type="PROSITE" id="PS00406">
    <property type="entry name" value="ACTINS_1"/>
    <property type="match status" value="1"/>
</dbReference>
<dbReference type="PROSITE" id="PS00432">
    <property type="entry name" value="ACTINS_2"/>
    <property type="match status" value="1"/>
</dbReference>
<dbReference type="PROSITE" id="PS01132">
    <property type="entry name" value="ACTINS_ACT_LIKE"/>
    <property type="match status" value="1"/>
</dbReference>
<comment type="function">
    <text evidence="3">Actin is a highly conserved protein that polymerizes to produce filaments that form cross-linked networks in the cytoplasm. Polymerizes into shorter and less stable actin filaments compared to ACT2/actin-2; this is thought to facilitate gliding motility and host cell invasion. Has ATPase activity. ATP hydrolysis leads to the formation of a stable intermediate ADP-inorganic phosphate (Pi) actin, which is followed by the release of Pi. ATP hydrolysis affects filament stability; ADP-bound actin depolymerizes much faster than ATP- or ADP-Pi-bound actin. Plays an essential role during the asexual blood stage. At the segmented schizont stage, required for apicoplast migration and segregation into individual daughter merozoites. Also, required for the separation of daughter merozoites in the final stages of cytokinesis. Essential for merozoite invasion of, but not adhesion to or reorientation towards, host erythrocytes.</text>
</comment>
<comment type="catalytic activity">
    <reaction evidence="3">
        <text>ATP + H2O = ADP + phosphate + H(+)</text>
        <dbReference type="Rhea" id="RHEA:13065"/>
        <dbReference type="ChEBI" id="CHEBI:15377"/>
        <dbReference type="ChEBI" id="CHEBI:15378"/>
        <dbReference type="ChEBI" id="CHEBI:30616"/>
        <dbReference type="ChEBI" id="CHEBI:43474"/>
        <dbReference type="ChEBI" id="CHEBI:456216"/>
    </reaction>
</comment>
<comment type="activity regulation">
    <text evidence="3">ATP hydrolysis occurs in the polymeric state. Unlike for mammalian actin, ATP hydrolysis also occurs in the monomeric form and the release of inorganic phosphate (Pi) is more efficient.</text>
</comment>
<comment type="subunit">
    <text evidence="1 3">Monomer (G-actin). Oligomer (F-actin). Polymerization of globular actin (G-actin) leads to a structural filament (F-actin) in the form of a two-stranded helix. Unlike for mammalian monomeric actin, parasite monomeric actin is able to induce oligomerization in the presence of ATP or ADP. Mg(2+), which is used to coordinate ATP, is required for polymerization. Interacts with MyoA (By similarity). Interacts with DNase I with low affinity (By similarity).</text>
</comment>
<comment type="subcellular location">
    <subcellularLocation>
        <location evidence="2">Cytoplasm</location>
    </subcellularLocation>
    <subcellularLocation>
        <location evidence="2">Nucleus</location>
    </subcellularLocation>
    <subcellularLocation>
        <location evidence="3">Cytoplasm</location>
        <location evidence="3">Cytoskeleton</location>
    </subcellularLocation>
    <text evidence="2 3">During host erythrocytes invasion, filamentous actin localizes close to the junction between merozoites and the host cell. In schizonts, filamentous actin appears to connect apicoplasts (By similarity). Prior to gametocyte activation in the mosquito midgut, localizes to both the cytoplasm and the nucleus. Following gametocyte activation, relocalizes completely to the cytoplasm, in an ACT2-dependent manner (By similarity).</text>
</comment>
<comment type="miscellaneous">
    <text evidence="3">A potassium ion appears to reside in the active site during hydrolysis and leaves together with the inorganic phosphate Pi. K(+) does not activate Pi release; however, it may be relevant for ATP hydrolysis.</text>
</comment>
<comment type="miscellaneous">
    <text evidence="3">ACT1 and ACT2 differ in their polymerization, filament stability and helical structure. Unlike mammalian actin, Apicomplexa actins do not form long and stable filaments.</text>
</comment>
<comment type="similarity">
    <text evidence="4">Belongs to the actin family.</text>
</comment>